<comment type="function">
    <text evidence="1">Converts cobyric acid to cobinamide by the addition of aminopropanol on the F carboxylic group.</text>
</comment>
<comment type="pathway">
    <text evidence="1">Cofactor biosynthesis; adenosylcobalamin biosynthesis.</text>
</comment>
<comment type="subcellular location">
    <subcellularLocation>
        <location evidence="1">Cell membrane</location>
        <topology evidence="1">Multi-pass membrane protein</topology>
    </subcellularLocation>
</comment>
<comment type="similarity">
    <text evidence="1">Belongs to the CobD/CbiB family.</text>
</comment>
<gene>
    <name evidence="1" type="primary">cobD</name>
    <name type="ordered locus">Oant_1891</name>
</gene>
<sequence length="327" mass="34950">MEIKLIILSLALLLDRFVGDPPQLWQKVPHPVVLFGKAISWGEKRWNNRNLSASVLRRNGMWLTIGLVMACVVLGLVLELSLPFAGTAGAVAEILIVTVLLAQKSLADHVQAVALALREEGIEGGRRAVSMIVGRNPEHLDEGGVSRAAIESLAENASDGIVAPAFWFLVGGLPGLFAYKLINTADSMIGHLNDRYRDFGRFAAKLDDVANYIPARLTGLLASLATAITKDRLSGKEAFSVMRRDARLHRSPNAGWPESAFAGGLGLALAGPRQYGAEKVEGPMLNASGKRDANADDIDAALHLFWSTMSLMTGLVIAASLIGLLVG</sequence>
<accession>A6X053</accession>
<keyword id="KW-1003">Cell membrane</keyword>
<keyword id="KW-0169">Cobalamin biosynthesis</keyword>
<keyword id="KW-0472">Membrane</keyword>
<keyword id="KW-1185">Reference proteome</keyword>
<keyword id="KW-0812">Transmembrane</keyword>
<keyword id="KW-1133">Transmembrane helix</keyword>
<organism>
    <name type="scientific">Brucella anthropi (strain ATCC 49188 / DSM 6882 / CCUG 24695 / JCM 21032 / LMG 3331 / NBRC 15819 / NCTC 12168 / Alc 37)</name>
    <name type="common">Ochrobactrum anthropi</name>
    <dbReference type="NCBI Taxonomy" id="439375"/>
    <lineage>
        <taxon>Bacteria</taxon>
        <taxon>Pseudomonadati</taxon>
        <taxon>Pseudomonadota</taxon>
        <taxon>Alphaproteobacteria</taxon>
        <taxon>Hyphomicrobiales</taxon>
        <taxon>Brucellaceae</taxon>
        <taxon>Brucella/Ochrobactrum group</taxon>
        <taxon>Brucella</taxon>
    </lineage>
</organism>
<evidence type="ECO:0000255" key="1">
    <source>
        <dbReference type="HAMAP-Rule" id="MF_00024"/>
    </source>
</evidence>
<protein>
    <recommendedName>
        <fullName evidence="1">Cobalamin biosynthesis protein CobD</fullName>
    </recommendedName>
</protein>
<name>COBD_BRUA4</name>
<proteinExistence type="inferred from homology"/>
<feature type="chain" id="PRO_1000057214" description="Cobalamin biosynthesis protein CobD">
    <location>
        <begin position="1"/>
        <end position="327"/>
    </location>
</feature>
<feature type="transmembrane region" description="Helical" evidence="1">
    <location>
        <begin position="60"/>
        <end position="80"/>
    </location>
</feature>
<feature type="transmembrane region" description="Helical" evidence="1">
    <location>
        <begin position="82"/>
        <end position="102"/>
    </location>
</feature>
<feature type="transmembrane region" description="Helical" evidence="1">
    <location>
        <begin position="159"/>
        <end position="179"/>
    </location>
</feature>
<feature type="transmembrane region" description="Helical" evidence="1">
    <location>
        <begin position="304"/>
        <end position="324"/>
    </location>
</feature>
<dbReference type="EMBL" id="CP000758">
    <property type="protein sequence ID" value="ABS14607.1"/>
    <property type="molecule type" value="Genomic_DNA"/>
</dbReference>
<dbReference type="RefSeq" id="WP_012091870.1">
    <property type="nucleotide sequence ID" value="NC_009667.1"/>
</dbReference>
<dbReference type="STRING" id="439375.Oant_1891"/>
<dbReference type="KEGG" id="oan:Oant_1891"/>
<dbReference type="PATRIC" id="fig|439375.7.peg.1991"/>
<dbReference type="eggNOG" id="COG1270">
    <property type="taxonomic scope" value="Bacteria"/>
</dbReference>
<dbReference type="HOGENOM" id="CLU_054212_0_1_5"/>
<dbReference type="PhylomeDB" id="A6X053"/>
<dbReference type="UniPathway" id="UPA00148"/>
<dbReference type="Proteomes" id="UP000002301">
    <property type="component" value="Chromosome 1"/>
</dbReference>
<dbReference type="GO" id="GO:0005886">
    <property type="term" value="C:plasma membrane"/>
    <property type="evidence" value="ECO:0007669"/>
    <property type="project" value="UniProtKB-SubCell"/>
</dbReference>
<dbReference type="GO" id="GO:0015420">
    <property type="term" value="F:ABC-type vitamin B12 transporter activity"/>
    <property type="evidence" value="ECO:0007669"/>
    <property type="project" value="UniProtKB-UniRule"/>
</dbReference>
<dbReference type="GO" id="GO:0048472">
    <property type="term" value="F:threonine-phosphate decarboxylase activity"/>
    <property type="evidence" value="ECO:0007669"/>
    <property type="project" value="InterPro"/>
</dbReference>
<dbReference type="GO" id="GO:0009236">
    <property type="term" value="P:cobalamin biosynthetic process"/>
    <property type="evidence" value="ECO:0007669"/>
    <property type="project" value="UniProtKB-UniRule"/>
</dbReference>
<dbReference type="HAMAP" id="MF_00024">
    <property type="entry name" value="CobD_CbiB"/>
    <property type="match status" value="1"/>
</dbReference>
<dbReference type="InterPro" id="IPR004485">
    <property type="entry name" value="Cobalamin_biosynth_CobD/CbiB"/>
</dbReference>
<dbReference type="NCBIfam" id="TIGR00380">
    <property type="entry name" value="cobal_cbiB"/>
    <property type="match status" value="1"/>
</dbReference>
<dbReference type="PANTHER" id="PTHR34308">
    <property type="entry name" value="COBALAMIN BIOSYNTHESIS PROTEIN CBIB"/>
    <property type="match status" value="1"/>
</dbReference>
<dbReference type="PANTHER" id="PTHR34308:SF1">
    <property type="entry name" value="COBALAMIN BIOSYNTHESIS PROTEIN CBIB"/>
    <property type="match status" value="1"/>
</dbReference>
<dbReference type="Pfam" id="PF03186">
    <property type="entry name" value="CobD_Cbib"/>
    <property type="match status" value="1"/>
</dbReference>
<reference key="1">
    <citation type="journal article" date="2011" name="J. Bacteriol.">
        <title>Genome of Ochrobactrum anthropi ATCC 49188 T, a versatile opportunistic pathogen and symbiont of several eukaryotic hosts.</title>
        <authorList>
            <person name="Chain P.S."/>
            <person name="Lang D.M."/>
            <person name="Comerci D.J."/>
            <person name="Malfatti S.A."/>
            <person name="Vergez L.M."/>
            <person name="Shin M."/>
            <person name="Ugalde R.A."/>
            <person name="Garcia E."/>
            <person name="Tolmasky M.E."/>
        </authorList>
    </citation>
    <scope>NUCLEOTIDE SEQUENCE [LARGE SCALE GENOMIC DNA]</scope>
    <source>
        <strain>ATCC 49188 / DSM 6882 / CCUG 24695 / JCM 21032 / LMG 3331 / NBRC 15819 / NCTC 12168 / Alc 37</strain>
    </source>
</reference>